<sequence length="366" mass="38759">MMQIFIAGAVAFLAAVLFTPVLIRKFSDEGLGQEIREEGPKSHLKKRGTPTMGGIAILVGITLGYIVAVLVGLVFTGSGPGVSGWLVLGLTLALGGVGFADDYIKLVKGRNLGLNARAKLICQLVIAIAFGVMILQFPDSNDITPGSTYLSFVREMPTFNIAVGGAVIGMILFLIFINIVISAWSNAVNLTDGLDGLASGVTAIVMGAYVLITFWQFRNSCADGAAAGCYFVRDPLDLAMLASAGLGACLGFLWWNASPAKIFMGDTGSLALGGLVAGLSITSHTELLMIIVGAIFVLETVSVVIQVTYFKTTGKRVFRMAPIHHHFENGGWAETTVVVRFWLLAALAAMTGFGLFYGEWLTATSF</sequence>
<feature type="chain" id="PRO_1000090614" description="Phospho-N-acetylmuramoyl-pentapeptide-transferase">
    <location>
        <begin position="1"/>
        <end position="366"/>
    </location>
</feature>
<feature type="transmembrane region" description="Helical" evidence="1">
    <location>
        <begin position="3"/>
        <end position="23"/>
    </location>
</feature>
<feature type="transmembrane region" description="Helical" evidence="1">
    <location>
        <begin position="55"/>
        <end position="75"/>
    </location>
</feature>
<feature type="transmembrane region" description="Helical" evidence="1">
    <location>
        <begin position="80"/>
        <end position="100"/>
    </location>
</feature>
<feature type="transmembrane region" description="Helical" evidence="1">
    <location>
        <begin position="118"/>
        <end position="138"/>
    </location>
</feature>
<feature type="transmembrane region" description="Helical" evidence="1">
    <location>
        <begin position="161"/>
        <end position="181"/>
    </location>
</feature>
<feature type="transmembrane region" description="Helical" evidence="1">
    <location>
        <begin position="197"/>
        <end position="217"/>
    </location>
</feature>
<feature type="transmembrane region" description="Helical" evidence="1">
    <location>
        <begin position="235"/>
        <end position="255"/>
    </location>
</feature>
<feature type="transmembrane region" description="Helical" evidence="1">
    <location>
        <begin position="262"/>
        <end position="282"/>
    </location>
</feature>
<feature type="transmembrane region" description="Helical" evidence="1">
    <location>
        <begin position="287"/>
        <end position="307"/>
    </location>
</feature>
<feature type="transmembrane region" description="Helical" evidence="1">
    <location>
        <begin position="341"/>
        <end position="361"/>
    </location>
</feature>
<comment type="function">
    <text evidence="1">Catalyzes the initial step of the lipid cycle reactions in the biosynthesis of the cell wall peptidoglycan: transfers peptidoglycan precursor phospho-MurNAc-pentapeptide from UDP-MurNAc-pentapeptide onto the lipid carrier undecaprenyl phosphate, yielding undecaprenyl-pyrophosphoryl-MurNAc-pentapeptide, known as lipid I.</text>
</comment>
<comment type="catalytic activity">
    <reaction evidence="1">
        <text>UDP-N-acetyl-alpha-D-muramoyl-L-alanyl-gamma-D-glutamyl-meso-2,6-diaminopimeloyl-D-alanyl-D-alanine + di-trans,octa-cis-undecaprenyl phosphate = di-trans,octa-cis-undecaprenyl diphospho-N-acetyl-alpha-D-muramoyl-L-alanyl-D-glutamyl-meso-2,6-diaminopimeloyl-D-alanyl-D-alanine + UMP</text>
        <dbReference type="Rhea" id="RHEA:28386"/>
        <dbReference type="ChEBI" id="CHEBI:57865"/>
        <dbReference type="ChEBI" id="CHEBI:60392"/>
        <dbReference type="ChEBI" id="CHEBI:61386"/>
        <dbReference type="ChEBI" id="CHEBI:61387"/>
        <dbReference type="EC" id="2.7.8.13"/>
    </reaction>
</comment>
<comment type="cofactor">
    <cofactor evidence="1">
        <name>Mg(2+)</name>
        <dbReference type="ChEBI" id="CHEBI:18420"/>
    </cofactor>
</comment>
<comment type="pathway">
    <text evidence="1">Cell wall biogenesis; peptidoglycan biosynthesis.</text>
</comment>
<comment type="subcellular location">
    <subcellularLocation>
        <location evidence="1">Cell membrane</location>
        <topology evidence="1">Multi-pass membrane protein</topology>
    </subcellularLocation>
</comment>
<comment type="similarity">
    <text evidence="1">Belongs to the glycosyltransferase 4 family. MraY subfamily.</text>
</comment>
<protein>
    <recommendedName>
        <fullName evidence="1">Phospho-N-acetylmuramoyl-pentapeptide-transferase</fullName>
        <ecNumber evidence="1">2.7.8.13</ecNumber>
    </recommendedName>
    <alternativeName>
        <fullName evidence="1">UDP-MurNAc-pentapeptide phosphotransferase</fullName>
    </alternativeName>
</protein>
<gene>
    <name evidence="1" type="primary">mraY</name>
    <name type="ordered locus">cu1208</name>
</gene>
<reference key="1">
    <citation type="journal article" date="2008" name="J. Biotechnol.">
        <title>The lifestyle of Corynebacterium urealyticum derived from its complete genome sequence established by pyrosequencing.</title>
        <authorList>
            <person name="Tauch A."/>
            <person name="Trost E."/>
            <person name="Tilker A."/>
            <person name="Ludewig U."/>
            <person name="Schneiker S."/>
            <person name="Goesmann A."/>
            <person name="Arnold W."/>
            <person name="Bekel T."/>
            <person name="Brinkrolf K."/>
            <person name="Brune I."/>
            <person name="Goetker S."/>
            <person name="Kalinowski J."/>
            <person name="Kamp P.-B."/>
            <person name="Lobo F.P."/>
            <person name="Viehoever P."/>
            <person name="Weisshaar B."/>
            <person name="Soriano F."/>
            <person name="Droege M."/>
            <person name="Puehler A."/>
        </authorList>
    </citation>
    <scope>NUCLEOTIDE SEQUENCE [LARGE SCALE GENOMIC DNA]</scope>
    <source>
        <strain>ATCC 43042 / DSM 7109</strain>
    </source>
</reference>
<evidence type="ECO:0000255" key="1">
    <source>
        <dbReference type="HAMAP-Rule" id="MF_00038"/>
    </source>
</evidence>
<accession>B1VHC7</accession>
<dbReference type="EC" id="2.7.8.13" evidence="1"/>
<dbReference type="EMBL" id="AM942444">
    <property type="protein sequence ID" value="CAQ05168.1"/>
    <property type="molecule type" value="Genomic_DNA"/>
</dbReference>
<dbReference type="RefSeq" id="WP_012360456.1">
    <property type="nucleotide sequence ID" value="NC_010545.1"/>
</dbReference>
<dbReference type="SMR" id="B1VHC7"/>
<dbReference type="STRING" id="504474.cu1208"/>
<dbReference type="GeneID" id="60603989"/>
<dbReference type="KEGG" id="cur:cu1208"/>
<dbReference type="eggNOG" id="COG0472">
    <property type="taxonomic scope" value="Bacteria"/>
</dbReference>
<dbReference type="HOGENOM" id="CLU_023982_0_1_11"/>
<dbReference type="UniPathway" id="UPA00219"/>
<dbReference type="Proteomes" id="UP000001727">
    <property type="component" value="Chromosome"/>
</dbReference>
<dbReference type="GO" id="GO:0005886">
    <property type="term" value="C:plasma membrane"/>
    <property type="evidence" value="ECO:0007669"/>
    <property type="project" value="UniProtKB-SubCell"/>
</dbReference>
<dbReference type="GO" id="GO:0046872">
    <property type="term" value="F:metal ion binding"/>
    <property type="evidence" value="ECO:0007669"/>
    <property type="project" value="UniProtKB-KW"/>
</dbReference>
<dbReference type="GO" id="GO:0008963">
    <property type="term" value="F:phospho-N-acetylmuramoyl-pentapeptide-transferase activity"/>
    <property type="evidence" value="ECO:0007669"/>
    <property type="project" value="UniProtKB-UniRule"/>
</dbReference>
<dbReference type="GO" id="GO:0051992">
    <property type="term" value="F:UDP-N-acetylmuramoyl-L-alanyl-D-glutamyl-meso-2,6-diaminopimelyl-D-alanyl-D-alanine:undecaprenyl-phosphate transferase activity"/>
    <property type="evidence" value="ECO:0007669"/>
    <property type="project" value="RHEA"/>
</dbReference>
<dbReference type="GO" id="GO:0051301">
    <property type="term" value="P:cell division"/>
    <property type="evidence" value="ECO:0007669"/>
    <property type="project" value="UniProtKB-KW"/>
</dbReference>
<dbReference type="GO" id="GO:0071555">
    <property type="term" value="P:cell wall organization"/>
    <property type="evidence" value="ECO:0007669"/>
    <property type="project" value="UniProtKB-KW"/>
</dbReference>
<dbReference type="GO" id="GO:0009252">
    <property type="term" value="P:peptidoglycan biosynthetic process"/>
    <property type="evidence" value="ECO:0007669"/>
    <property type="project" value="UniProtKB-UniRule"/>
</dbReference>
<dbReference type="GO" id="GO:0008360">
    <property type="term" value="P:regulation of cell shape"/>
    <property type="evidence" value="ECO:0007669"/>
    <property type="project" value="UniProtKB-KW"/>
</dbReference>
<dbReference type="CDD" id="cd06852">
    <property type="entry name" value="GT_MraY"/>
    <property type="match status" value="1"/>
</dbReference>
<dbReference type="HAMAP" id="MF_00038">
    <property type="entry name" value="MraY"/>
    <property type="match status" value="1"/>
</dbReference>
<dbReference type="InterPro" id="IPR000715">
    <property type="entry name" value="Glycosyl_transferase_4"/>
</dbReference>
<dbReference type="InterPro" id="IPR003524">
    <property type="entry name" value="PNAcMuramoyl-5peptid_Trfase"/>
</dbReference>
<dbReference type="InterPro" id="IPR018480">
    <property type="entry name" value="PNAcMuramoyl-5peptid_Trfase_CS"/>
</dbReference>
<dbReference type="NCBIfam" id="TIGR00445">
    <property type="entry name" value="mraY"/>
    <property type="match status" value="1"/>
</dbReference>
<dbReference type="PANTHER" id="PTHR22926">
    <property type="entry name" value="PHOSPHO-N-ACETYLMURAMOYL-PENTAPEPTIDE-TRANSFERASE"/>
    <property type="match status" value="1"/>
</dbReference>
<dbReference type="PANTHER" id="PTHR22926:SF5">
    <property type="entry name" value="PHOSPHO-N-ACETYLMURAMOYL-PENTAPEPTIDE-TRANSFERASE HOMOLOG"/>
    <property type="match status" value="1"/>
</dbReference>
<dbReference type="Pfam" id="PF00953">
    <property type="entry name" value="Glycos_transf_4"/>
    <property type="match status" value="1"/>
</dbReference>
<dbReference type="Pfam" id="PF10555">
    <property type="entry name" value="MraY_sig1"/>
    <property type="match status" value="1"/>
</dbReference>
<dbReference type="PROSITE" id="PS01347">
    <property type="entry name" value="MRAY_1"/>
    <property type="match status" value="1"/>
</dbReference>
<dbReference type="PROSITE" id="PS01348">
    <property type="entry name" value="MRAY_2"/>
    <property type="match status" value="1"/>
</dbReference>
<keyword id="KW-0131">Cell cycle</keyword>
<keyword id="KW-0132">Cell division</keyword>
<keyword id="KW-1003">Cell membrane</keyword>
<keyword id="KW-0133">Cell shape</keyword>
<keyword id="KW-0961">Cell wall biogenesis/degradation</keyword>
<keyword id="KW-0460">Magnesium</keyword>
<keyword id="KW-0472">Membrane</keyword>
<keyword id="KW-0479">Metal-binding</keyword>
<keyword id="KW-0573">Peptidoglycan synthesis</keyword>
<keyword id="KW-1185">Reference proteome</keyword>
<keyword id="KW-0808">Transferase</keyword>
<keyword id="KW-0812">Transmembrane</keyword>
<keyword id="KW-1133">Transmembrane helix</keyword>
<proteinExistence type="inferred from homology"/>
<organism>
    <name type="scientific">Corynebacterium urealyticum (strain ATCC 43042 / DSM 7109)</name>
    <dbReference type="NCBI Taxonomy" id="504474"/>
    <lineage>
        <taxon>Bacteria</taxon>
        <taxon>Bacillati</taxon>
        <taxon>Actinomycetota</taxon>
        <taxon>Actinomycetes</taxon>
        <taxon>Mycobacteriales</taxon>
        <taxon>Corynebacteriaceae</taxon>
        <taxon>Corynebacterium</taxon>
    </lineage>
</organism>
<name>MRAY_CORU7</name>